<feature type="chain" id="PRO_0000324607" description="Cilia- and flagella-associated protein 54">
    <location>
        <begin position="1"/>
        <end position="3106"/>
    </location>
</feature>
<feature type="region of interest" description="Disordered" evidence="2">
    <location>
        <begin position="1"/>
        <end position="58"/>
    </location>
</feature>
<feature type="region of interest" description="Disordered" evidence="2">
    <location>
        <begin position="2354"/>
        <end position="2374"/>
    </location>
</feature>
<feature type="compositionally biased region" description="Low complexity" evidence="2">
    <location>
        <begin position="1"/>
        <end position="24"/>
    </location>
</feature>
<feature type="compositionally biased region" description="Low complexity" evidence="2">
    <location>
        <begin position="34"/>
        <end position="48"/>
    </location>
</feature>
<feature type="compositionally biased region" description="Low complexity" evidence="2">
    <location>
        <begin position="2356"/>
        <end position="2368"/>
    </location>
</feature>
<feature type="splice variant" id="VSP_058120" description="In isoform 2.">
    <original>Q</original>
    <variation>QDERGGMDNSKFTPGKVEFCLGTEEMHMPTPPDLSQENFRVFSSVEKSKLPSSQLGLVISSYYQTI</variation>
    <location>
        <position position="1913"/>
    </location>
</feature>
<feature type="sequence conflict" description="In Ref. 3; BAC35315." evidence="4" ref="3">
    <original>S</original>
    <variation>F</variation>
    <location>
        <position position="14"/>
    </location>
</feature>
<feature type="sequence conflict" description="In Ref. 3; BAC35315." evidence="4" ref="3">
    <original>K</original>
    <variation>R</variation>
    <location>
        <position position="94"/>
    </location>
</feature>
<protein>
    <recommendedName>
        <fullName evidence="4">Cilia- and flagella-associated protein 54</fullName>
    </recommendedName>
</protein>
<reference key="1">
    <citation type="journal article" date="2015" name="Mol. Biol. Cell">
        <title>CFAP54 is required for proper ciliary motility and assembly of the central pair apparatus in mice.</title>
        <authorList>
            <person name="McKenzie C.W."/>
            <person name="Craige B."/>
            <person name="Kroeger T.V."/>
            <person name="Finn R."/>
            <person name="Wyatt T.A."/>
            <person name="Sisson J.H."/>
            <person name="Pavlik J.A."/>
            <person name="Strittmatter L."/>
            <person name="Hendricks G.M."/>
            <person name="Witman G.B."/>
            <person name="Lee L."/>
        </authorList>
    </citation>
    <scope>NUCLEOTIDE SEQUENCE [MRNA] (ISOFORM 2)</scope>
    <scope>FUNCTION</scope>
    <scope>DISRUPTION PHENOTYPE</scope>
    <scope>TISSUE SPECIFICITY</scope>
    <source>
        <strain>C57BL/6J</strain>
    </source>
</reference>
<reference key="2">
    <citation type="journal article" date="2009" name="PLoS Biol.">
        <title>Lineage-specific biology revealed by a finished genome assembly of the mouse.</title>
        <authorList>
            <person name="Church D.M."/>
            <person name="Goodstadt L."/>
            <person name="Hillier L.W."/>
            <person name="Zody M.C."/>
            <person name="Goldstein S."/>
            <person name="She X."/>
            <person name="Bult C.J."/>
            <person name="Agarwala R."/>
            <person name="Cherry J.L."/>
            <person name="DiCuccio M."/>
            <person name="Hlavina W."/>
            <person name="Kapustin Y."/>
            <person name="Meric P."/>
            <person name="Maglott D."/>
            <person name="Birtle Z."/>
            <person name="Marques A.C."/>
            <person name="Graves T."/>
            <person name="Zhou S."/>
            <person name="Teague B."/>
            <person name="Potamousis K."/>
            <person name="Churas C."/>
            <person name="Place M."/>
            <person name="Herschleb J."/>
            <person name="Runnheim R."/>
            <person name="Forrest D."/>
            <person name="Amos-Landgraf J."/>
            <person name="Schwartz D.C."/>
            <person name="Cheng Z."/>
            <person name="Lindblad-Toh K."/>
            <person name="Eichler E.E."/>
            <person name="Ponting C.P."/>
        </authorList>
    </citation>
    <scope>NUCLEOTIDE SEQUENCE [LARGE SCALE GENOMIC DNA]</scope>
    <source>
        <strain>C57BL/6J</strain>
    </source>
</reference>
<reference key="3">
    <citation type="journal article" date="2005" name="Science">
        <title>The transcriptional landscape of the mammalian genome.</title>
        <authorList>
            <person name="Carninci P."/>
            <person name="Kasukawa T."/>
            <person name="Katayama S."/>
            <person name="Gough J."/>
            <person name="Frith M.C."/>
            <person name="Maeda N."/>
            <person name="Oyama R."/>
            <person name="Ravasi T."/>
            <person name="Lenhard B."/>
            <person name="Wells C."/>
            <person name="Kodzius R."/>
            <person name="Shimokawa K."/>
            <person name="Bajic V.B."/>
            <person name="Brenner S.E."/>
            <person name="Batalov S."/>
            <person name="Forrest A.R."/>
            <person name="Zavolan M."/>
            <person name="Davis M.J."/>
            <person name="Wilming L.G."/>
            <person name="Aidinis V."/>
            <person name="Allen J.E."/>
            <person name="Ambesi-Impiombato A."/>
            <person name="Apweiler R."/>
            <person name="Aturaliya R.N."/>
            <person name="Bailey T.L."/>
            <person name="Bansal M."/>
            <person name="Baxter L."/>
            <person name="Beisel K.W."/>
            <person name="Bersano T."/>
            <person name="Bono H."/>
            <person name="Chalk A.M."/>
            <person name="Chiu K.P."/>
            <person name="Choudhary V."/>
            <person name="Christoffels A."/>
            <person name="Clutterbuck D.R."/>
            <person name="Crowe M.L."/>
            <person name="Dalla E."/>
            <person name="Dalrymple B.P."/>
            <person name="de Bono B."/>
            <person name="Della Gatta G."/>
            <person name="di Bernardo D."/>
            <person name="Down T."/>
            <person name="Engstrom P."/>
            <person name="Fagiolini M."/>
            <person name="Faulkner G."/>
            <person name="Fletcher C.F."/>
            <person name="Fukushima T."/>
            <person name="Furuno M."/>
            <person name="Futaki S."/>
            <person name="Gariboldi M."/>
            <person name="Georgii-Hemming P."/>
            <person name="Gingeras T.R."/>
            <person name="Gojobori T."/>
            <person name="Green R.E."/>
            <person name="Gustincich S."/>
            <person name="Harbers M."/>
            <person name="Hayashi Y."/>
            <person name="Hensch T.K."/>
            <person name="Hirokawa N."/>
            <person name="Hill D."/>
            <person name="Huminiecki L."/>
            <person name="Iacono M."/>
            <person name="Ikeo K."/>
            <person name="Iwama A."/>
            <person name="Ishikawa T."/>
            <person name="Jakt M."/>
            <person name="Kanapin A."/>
            <person name="Katoh M."/>
            <person name="Kawasawa Y."/>
            <person name="Kelso J."/>
            <person name="Kitamura H."/>
            <person name="Kitano H."/>
            <person name="Kollias G."/>
            <person name="Krishnan S.P."/>
            <person name="Kruger A."/>
            <person name="Kummerfeld S.K."/>
            <person name="Kurochkin I.V."/>
            <person name="Lareau L.F."/>
            <person name="Lazarevic D."/>
            <person name="Lipovich L."/>
            <person name="Liu J."/>
            <person name="Liuni S."/>
            <person name="McWilliam S."/>
            <person name="Madan Babu M."/>
            <person name="Madera M."/>
            <person name="Marchionni L."/>
            <person name="Matsuda H."/>
            <person name="Matsuzawa S."/>
            <person name="Miki H."/>
            <person name="Mignone F."/>
            <person name="Miyake S."/>
            <person name="Morris K."/>
            <person name="Mottagui-Tabar S."/>
            <person name="Mulder N."/>
            <person name="Nakano N."/>
            <person name="Nakauchi H."/>
            <person name="Ng P."/>
            <person name="Nilsson R."/>
            <person name="Nishiguchi S."/>
            <person name="Nishikawa S."/>
            <person name="Nori F."/>
            <person name="Ohara O."/>
            <person name="Okazaki Y."/>
            <person name="Orlando V."/>
            <person name="Pang K.C."/>
            <person name="Pavan W.J."/>
            <person name="Pavesi G."/>
            <person name="Pesole G."/>
            <person name="Petrovsky N."/>
            <person name="Piazza S."/>
            <person name="Reed J."/>
            <person name="Reid J.F."/>
            <person name="Ring B.Z."/>
            <person name="Ringwald M."/>
            <person name="Rost B."/>
            <person name="Ruan Y."/>
            <person name="Salzberg S.L."/>
            <person name="Sandelin A."/>
            <person name="Schneider C."/>
            <person name="Schoenbach C."/>
            <person name="Sekiguchi K."/>
            <person name="Semple C.A."/>
            <person name="Seno S."/>
            <person name="Sessa L."/>
            <person name="Sheng Y."/>
            <person name="Shibata Y."/>
            <person name="Shimada H."/>
            <person name="Shimada K."/>
            <person name="Silva D."/>
            <person name="Sinclair B."/>
            <person name="Sperling S."/>
            <person name="Stupka E."/>
            <person name="Sugiura K."/>
            <person name="Sultana R."/>
            <person name="Takenaka Y."/>
            <person name="Taki K."/>
            <person name="Tammoja K."/>
            <person name="Tan S.L."/>
            <person name="Tang S."/>
            <person name="Taylor M.S."/>
            <person name="Tegner J."/>
            <person name="Teichmann S.A."/>
            <person name="Ueda H.R."/>
            <person name="van Nimwegen E."/>
            <person name="Verardo R."/>
            <person name="Wei C.L."/>
            <person name="Yagi K."/>
            <person name="Yamanishi H."/>
            <person name="Zabarovsky E."/>
            <person name="Zhu S."/>
            <person name="Zimmer A."/>
            <person name="Hide W."/>
            <person name="Bult C."/>
            <person name="Grimmond S.M."/>
            <person name="Teasdale R.D."/>
            <person name="Liu E.T."/>
            <person name="Brusic V."/>
            <person name="Quackenbush J."/>
            <person name="Wahlestedt C."/>
            <person name="Mattick J.S."/>
            <person name="Hume D.A."/>
            <person name="Kai C."/>
            <person name="Sasaki D."/>
            <person name="Tomaru Y."/>
            <person name="Fukuda S."/>
            <person name="Kanamori-Katayama M."/>
            <person name="Suzuki M."/>
            <person name="Aoki J."/>
            <person name="Arakawa T."/>
            <person name="Iida J."/>
            <person name="Imamura K."/>
            <person name="Itoh M."/>
            <person name="Kato T."/>
            <person name="Kawaji H."/>
            <person name="Kawagashira N."/>
            <person name="Kawashima T."/>
            <person name="Kojima M."/>
            <person name="Kondo S."/>
            <person name="Konno H."/>
            <person name="Nakano K."/>
            <person name="Ninomiya N."/>
            <person name="Nishio T."/>
            <person name="Okada M."/>
            <person name="Plessy C."/>
            <person name="Shibata K."/>
            <person name="Shiraki T."/>
            <person name="Suzuki S."/>
            <person name="Tagami M."/>
            <person name="Waki K."/>
            <person name="Watahiki A."/>
            <person name="Okamura-Oho Y."/>
            <person name="Suzuki H."/>
            <person name="Kawai J."/>
            <person name="Hayashizaki Y."/>
        </authorList>
    </citation>
    <scope>NUCLEOTIDE SEQUENCE [LARGE SCALE MRNA] OF 1-370</scope>
    <source>
        <strain>C57BL/6J</strain>
        <tissue>Lung</tissue>
    </source>
</reference>
<evidence type="ECO:0000250" key="1">
    <source>
        <dbReference type="UniProtKB" id="A8J666"/>
    </source>
</evidence>
<evidence type="ECO:0000256" key="2">
    <source>
        <dbReference type="SAM" id="MobiDB-lite"/>
    </source>
</evidence>
<evidence type="ECO:0000269" key="3">
    <source>
    </source>
</evidence>
<evidence type="ECO:0000305" key="4"/>
<evidence type="ECO:0000312" key="5">
    <source>
        <dbReference type="MGI" id="MGI:1922208"/>
    </source>
</evidence>
<proteinExistence type="evidence at transcript level"/>
<name>CFA54_MOUSE</name>
<organism>
    <name type="scientific">Mus musculus</name>
    <name type="common">Mouse</name>
    <dbReference type="NCBI Taxonomy" id="10090"/>
    <lineage>
        <taxon>Eukaryota</taxon>
        <taxon>Metazoa</taxon>
        <taxon>Chordata</taxon>
        <taxon>Craniata</taxon>
        <taxon>Vertebrata</taxon>
        <taxon>Euteleostomi</taxon>
        <taxon>Mammalia</taxon>
        <taxon>Eutheria</taxon>
        <taxon>Euarchontoglires</taxon>
        <taxon>Glires</taxon>
        <taxon>Rodentia</taxon>
        <taxon>Myomorpha</taxon>
        <taxon>Muroidea</taxon>
        <taxon>Muridae</taxon>
        <taxon>Murinae</taxon>
        <taxon>Mus</taxon>
        <taxon>Mus</taxon>
    </lineage>
</organism>
<dbReference type="EMBL" id="KM983399">
    <property type="protein sequence ID" value="AKN79615.1"/>
    <property type="molecule type" value="mRNA"/>
</dbReference>
<dbReference type="EMBL" id="AC122326">
    <property type="status" value="NOT_ANNOTATED_CDS"/>
    <property type="molecule type" value="Genomic_DNA"/>
</dbReference>
<dbReference type="EMBL" id="AC162939">
    <property type="status" value="NOT_ANNOTATED_CDS"/>
    <property type="molecule type" value="Genomic_DNA"/>
</dbReference>
<dbReference type="EMBL" id="AC168049">
    <property type="status" value="NOT_ANNOTATED_CDS"/>
    <property type="molecule type" value="Genomic_DNA"/>
</dbReference>
<dbReference type="EMBL" id="AK053219">
    <property type="protein sequence ID" value="BAC35315.1"/>
    <property type="molecule type" value="mRNA"/>
</dbReference>
<dbReference type="CCDS" id="CCDS88073.1">
    <molecule id="Q8C6S9-2"/>
</dbReference>
<dbReference type="RefSeq" id="NP_001333989.1">
    <molecule id="Q8C6S9-2"/>
    <property type="nucleotide sequence ID" value="NM_001347060.2"/>
</dbReference>
<dbReference type="RefSeq" id="XP_011241942.1">
    <property type="nucleotide sequence ID" value="XM_011243640.1"/>
</dbReference>
<dbReference type="RefSeq" id="XP_030101010.1">
    <molecule id="Q8C6S9-2"/>
    <property type="nucleotide sequence ID" value="XM_030245150.2"/>
</dbReference>
<dbReference type="SMR" id="Q8C6S9"/>
<dbReference type="FunCoup" id="Q8C6S9">
    <property type="interactions" value="59"/>
</dbReference>
<dbReference type="STRING" id="10090.ENSMUSP00000148636"/>
<dbReference type="GlyGen" id="Q8C6S9">
    <property type="glycosylation" value="1 site"/>
</dbReference>
<dbReference type="iPTMnet" id="Q8C6S9"/>
<dbReference type="PhosphoSitePlus" id="Q8C6S9"/>
<dbReference type="jPOST" id="Q8C6S9"/>
<dbReference type="PaxDb" id="10090-ENSMUSP00000129517"/>
<dbReference type="PeptideAtlas" id="Q8C6S9"/>
<dbReference type="ProteomicsDB" id="281648">
    <molecule id="Q8C6S9-1"/>
</dbReference>
<dbReference type="ProteomicsDB" id="281649">
    <molecule id="Q8C6S9-2"/>
</dbReference>
<dbReference type="Antibodypedia" id="50190">
    <property type="antibodies" value="6 antibodies from 5 providers"/>
</dbReference>
<dbReference type="Ensembl" id="ENSMUST00000168110.8">
    <molecule id="Q8C6S9-1"/>
    <property type="protein sequence ID" value="ENSMUSP00000129517.2"/>
    <property type="gene ID" value="ENSMUSG00000020014.20"/>
</dbReference>
<dbReference type="Ensembl" id="ENSMUST00000212902.2">
    <molecule id="Q8C6S9-2"/>
    <property type="protein sequence ID" value="ENSMUSP00000148636.2"/>
    <property type="gene ID" value="ENSMUSG00000020014.20"/>
</dbReference>
<dbReference type="GeneID" id="380654"/>
<dbReference type="KEGG" id="mmu:380654"/>
<dbReference type="UCSC" id="uc007guh.1">
    <molecule id="Q8C6S9-1"/>
    <property type="organism name" value="mouse"/>
</dbReference>
<dbReference type="AGR" id="MGI:1922208"/>
<dbReference type="CTD" id="144535"/>
<dbReference type="MGI" id="MGI:1922208">
    <property type="gene designation" value="Cfap54"/>
</dbReference>
<dbReference type="VEuPathDB" id="HostDB:ENSMUSG00000020014"/>
<dbReference type="eggNOG" id="ENOG502QVDY">
    <property type="taxonomic scope" value="Eukaryota"/>
</dbReference>
<dbReference type="GeneTree" id="ENSGT00940000162446"/>
<dbReference type="HOGENOM" id="CLU_000333_0_0_1"/>
<dbReference type="InParanoid" id="Q8C6S9"/>
<dbReference type="OMA" id="FTELNIM"/>
<dbReference type="PhylomeDB" id="Q8C6S9"/>
<dbReference type="TreeFam" id="TF328826"/>
<dbReference type="BioGRID-ORCS" id="380654">
    <property type="hits" value="0 hits in 5 CRISPR screens"/>
</dbReference>
<dbReference type="ChiTaRS" id="Cfap54">
    <property type="organism name" value="mouse"/>
</dbReference>
<dbReference type="PRO" id="PR:Q8C6S9"/>
<dbReference type="Proteomes" id="UP000000589">
    <property type="component" value="Chromosome 10"/>
</dbReference>
<dbReference type="RNAct" id="Q8C6S9">
    <property type="molecule type" value="protein"/>
</dbReference>
<dbReference type="Bgee" id="ENSMUSG00000020014">
    <property type="expression patterns" value="Expressed in spermatocyte and 108 other cell types or tissues"/>
</dbReference>
<dbReference type="ExpressionAtlas" id="Q8C6S9">
    <property type="expression patterns" value="baseline and differential"/>
</dbReference>
<dbReference type="GO" id="GO:0005930">
    <property type="term" value="C:axoneme"/>
    <property type="evidence" value="ECO:0000250"/>
    <property type="project" value="UniProtKB"/>
</dbReference>
<dbReference type="GO" id="GO:0005576">
    <property type="term" value="C:extracellular region"/>
    <property type="evidence" value="ECO:0007669"/>
    <property type="project" value="GOC"/>
</dbReference>
<dbReference type="GO" id="GO:0090660">
    <property type="term" value="P:cerebrospinal fluid circulation"/>
    <property type="evidence" value="ECO:0000316"/>
    <property type="project" value="MGI"/>
</dbReference>
<dbReference type="GO" id="GO:0060271">
    <property type="term" value="P:cilium assembly"/>
    <property type="evidence" value="ECO:0000315"/>
    <property type="project" value="UniProtKB"/>
</dbReference>
<dbReference type="GO" id="GO:0060294">
    <property type="term" value="P:cilium movement involved in cell motility"/>
    <property type="evidence" value="ECO:0000315"/>
    <property type="project" value="UniProtKB"/>
</dbReference>
<dbReference type="GO" id="GO:0051649">
    <property type="term" value="P:establishment of localization in cell"/>
    <property type="evidence" value="ECO:0000316"/>
    <property type="project" value="MGI"/>
</dbReference>
<dbReference type="GO" id="GO:0120197">
    <property type="term" value="P:mucociliary clearance"/>
    <property type="evidence" value="ECO:0000316"/>
    <property type="project" value="MGI"/>
</dbReference>
<dbReference type="GO" id="GO:0120316">
    <property type="term" value="P:sperm flagellum assembly"/>
    <property type="evidence" value="ECO:0000316"/>
    <property type="project" value="MGI"/>
</dbReference>
<dbReference type="GO" id="GO:0007283">
    <property type="term" value="P:spermatogenesis"/>
    <property type="evidence" value="ECO:0000315"/>
    <property type="project" value="UniProtKB"/>
</dbReference>
<dbReference type="InterPro" id="IPR027912">
    <property type="entry name" value="CFAP54"/>
</dbReference>
<dbReference type="PANTHER" id="PTHR33487">
    <property type="entry name" value="CILIA- AND FLAGELLA-ASSOCIATED PROTEIN 54"/>
    <property type="match status" value="1"/>
</dbReference>
<dbReference type="PANTHER" id="PTHR33487:SF1">
    <property type="entry name" value="CILIA- AND FLAGELLA-ASSOCIATED PROTEIN 54"/>
    <property type="match status" value="1"/>
</dbReference>
<dbReference type="Pfam" id="PF14858">
    <property type="entry name" value="CFAP54_N"/>
    <property type="match status" value="1"/>
</dbReference>
<keyword id="KW-0025">Alternative splicing</keyword>
<keyword id="KW-0966">Cell projection</keyword>
<keyword id="KW-0969">Cilium</keyword>
<keyword id="KW-0970">Cilium biogenesis/degradation</keyword>
<keyword id="KW-0963">Cytoplasm</keyword>
<keyword id="KW-0206">Cytoskeleton</keyword>
<keyword id="KW-0221">Differentiation</keyword>
<keyword id="KW-1185">Reference proteome</keyword>
<keyword id="KW-0744">Spermatogenesis</keyword>
<comment type="function">
    <text evidence="3">Required for assembly and function of cilia and flagella (PubMed:26224312).</text>
</comment>
<comment type="subcellular location">
    <subcellularLocation>
        <location evidence="1">Cytoplasm</location>
        <location evidence="1">Cytoskeleton</location>
        <location evidence="1">Cilium axoneme</location>
    </subcellularLocation>
</comment>
<comment type="alternative products">
    <event type="alternative splicing"/>
    <isoform>
        <id>Q8C6S9-1</id>
        <name>1</name>
        <sequence type="displayed"/>
    </isoform>
    <isoform>
        <id>Q8C6S9-2</id>
        <name>2</name>
        <sequence type="described" ref="VSP_058120"/>
    </isoform>
</comment>
<comment type="tissue specificity">
    <text evidence="3">Expressed at high level in the testis and at a low level in the lung and brain.</text>
</comment>
<comment type="disruption phenotype">
    <text evidence="3">Deficient mice shown hydrocephalus, male infertility, and accumulation of mucus in the sinus cavity. The male infertility is due to severe defects in spermatid flagellar formation.</text>
</comment>
<comment type="similarity">
    <text evidence="4">Belongs to the CFAP54 family.</text>
</comment>
<gene>
    <name evidence="5" type="primary">Cfap54</name>
</gene>
<accession>Q8C6S9</accession>
<accession>A0A0K0NTX9</accession>
<accession>D3Z3Q2</accession>
<accession>E9PUV7</accession>
<sequence length="3106" mass="353760">MASSRSSSSSSEESPDSETSVSPVHLPPTPPPTSTAVLKSPSESKSSSTDPPQCTHSEDSLPSAAFYGPLDSKNPLLASCEKEIRELLGFMKKKKALATSMEQKYEFHRRCATTLFNIWTKYAPRLPSNYYNEKLLKVGDSLCQIKEYKLALLQCYGRYLQEFIADFDEHKEDVNHFKTVFFPKGFGDETARLTFHALSGKNICNYQLVCESDANLQNEESVRQCLHILSSFRLIMQVALPQEHLCWIIFNGTLYIYTICRKLMVIGQSSKALEFLLWASMCMESSVPLLSIRYLTWRATLYTAVCQCHYDCQDGIHGEAFARRALAKIDELRQLELMSSSSSLETSRKYYREATIKMAVMIFKRGVFESRRKNKNVLRPKLRLNLKEAQSLPWPRTVTERLLDELLDSTSSRFLAVLEALSDSNRRILQTGPLVTDEMELRDVVSELFMAGKELLILSNVRSNGKLDFPQTSLLEHVVEKRNALSVGASVRFAKLAFTYEEWGLFESLAGQLIHFLQKQDNPQSKKAEKDLILLLAVEPLINVKRNRGLIFPLETDKETQSIENYLKHIACHESCMRTTFTEDTFSLAAILHFCVCVPTQGVLPDKDIVVDIIGLLWQRCKLGIQRLNIPKNDFAKYSHKISTNKWVYLLWQISEVIHCYKLEDLDIVMVAEITLRLSEILESLGSPKRKFKKSADLSAKKGPDELPGTSKGVPEILPILKRAPVEQLFYAYELLDKAIIGMSWKCMLTTLSDGSSVIDHCYVKDSQDVDGDTYKPIASNSYTMDLHLELIQAQHRIAVVLLDQLEVLQAPTVSTNTPAKGWEKVKKPRSTECFTELTVMKKIKKNKLSKAIYLMQKALLLFEKDAVCETSRNLLMEANALIEKVEAEQNALYSYQKFLGSSKIKKSRIPPPPILLARTHCSVTLKPAPFISEVKASWYCILGCKADGSYGKVRLNNNHLPNSGEAIPADGRSFFEIKGLETNAQYCFAIAAYSSSGKLIGDAIGETTKPILIYPPLSAVTARMYLTQVAYQIGNYEMAKKVFSPVWDYFVASPLPDEQSVICLSNIMTITQKRLHSNILADTSSILLYLFLRNIFVMSDIKIKEENLFCDNIKGNEIFPAQQVARLVECENVLVALELSNFLNDANFALQAVTQCYGLLAPIIYHNIVLVPVIQILIKCIVVLQGIPSIIHSKKNISSFESIQHMIACCIFYMTKILRSWKEYDLAIMLINYGKKMLDITSGCRSLFGIEQEETAEEGVCSKKTSRTKKPQQVLLPEKINEQLALLETHLLKTTKQINSAELSGSEDPIFLYPIVLNWTVKGAMKEVMKFKQRPRFLEFFTQIMLKCMNDEKFHLMVEISAPVYDFLKRRNESLIGVKRIKYKETVISRRALKSPSKFKAIVIEIGKSSDLTRRRRKKKKTLKDFFYKNPSIFDMAELDRNKRTDVRKMAYRSLSDNLNPLILTYVRRKRFHQILLEELPWRAQMNLYLANAHFHLFLQKLTERTKERLGSSYSSVSFRSCDPNLFSLFHSGTVLPTAKLTVDSYNAMMDALTVSKKKKHNQTTDTEDLSVLFNSKSDDNIPKMKTQTIYESDSQLGIGVNVREKDRTLVWGLDHFMKIFLCCRRAMVLAYRGGYWTLLQNCCRVFWNFSRELQILLKQTVASCKTFPVSQDNFLCICVLPFYLGAELLIDMLIKLQSTNSIKPFEERGEFSIPSCYGNIKSDNGGSSLIFEHPLDDVNVVDLRWIHDFVLKSLEVLYQVEKWETLVSLAIQFNIISHERYTEQVTPLLVYAQRQLVQRIKELNGPELSRQACARYEAENGEKITCRNFIGKRLKIDSSTPKNLAELQGSSEPLKTLITSEQRLAKQLVSVPLDVNDTLRCFRETLEKSKYHNRSVRHSRKLLSLFLAQTQDVLQTSNQRSLKVQSLHSLGSLLLFADKKRAAFKCWSQALDDIFRKPDVLHNWKEFGTSLPGAPSSSSPPGFKDYSEEFLSKFGIWGCLQAAMITAKIAQFIKTANVKKRINCCILSALLFQSLLRTTLPHPKAERNYAQYEITQLLPGIELFSDKFRADICSVIASLYYVIRELHYAKYNLIVLPLLALYQYFVSVICQDIVRNLEARILKIEILIDLGFFSEAFYELFQIYHGKNMPCAIPAGYKATMKVKITQSFDSGKPLTHKDNMQALEELINRGLPHILVNLGYQHLLNKFNFAKSHFFISLAATINCIPDPSPKIMYYQFITERSKPTPQNLKDNENSHGQFLRLRDDYNLNTIKSILLMEAEEKVNSLLSETEHQCHRPLYLSSVLELEIMVEARLHLAAIALQRYRPAYSTAILYSTLKLLQDSKVFKKKVPEESCSPTSPETSTTESKDDSEFLDPISLNSREYFNIHLWLRCRLMLVTSFIAQIRGIGIMKESELTDCLSLIDEVCTEAKSADDTEVLAEFLMQAVVLGLQEKHFKADIIQKLKEIISLLEGSEFLSPRSWLTLAKSLILMDDLTKAEKFKKASSKENKLIFLNQAHRILIAQMLTFGETIEFPLSDSDYASPLQPLKNIYLPHVMLLAKVKLRIGHTMAKQVCSSSKKKDISKWLPVLHMFDMALKVCKATAAEEYEVEAEILFQKGRIERQMLMEEKTSIAHIESFFEAIQISLKNDQNSGLIRDSYLEIALVYFYLKKPKRKASATTLKPLPRRHSSVKDPVATQTEMYSSLAWIAIRAAAQVSESVLGINLLIGKKRAMIDKVNNITLPNIPEFATVDLLSSYTDYLLENYQVVFQTSNSLMCENDDVYDCIDGRKRNLSKVDVTWILLIRYYIHLQRINNMSKLLASATPVSGISLPDDTLLTSLYNSELILRQKEMHLFLKRFLQLYSSSCIDGFPRELLQGLENISLEKVLFESSGKVHRDSSLQSDLSGKLTVCPSYTEISSEMAVQALNKELCFQWYIPPLDKPLKDSEPMVLLLYAYNLKPLRILDIKVSTGNSLYVGTSWIPLRSVIAVHQKLSNLAQIAEISLPSVPEVTSEENIYETIEPEDKPIDTDLENMILECCSEIEALFSNNKDKDNEPPPPMTKVPFDVSLPAIFSLERLFDLANGCIVSVGSLFNWMVSIIQ</sequence>